<feature type="chain" id="PRO_1000200450" description="5-oxoprolinase subunit A">
    <location>
        <begin position="1"/>
        <end position="253"/>
    </location>
</feature>
<organism>
    <name type="scientific">Bacillus cereus (strain Q1)</name>
    <dbReference type="NCBI Taxonomy" id="361100"/>
    <lineage>
        <taxon>Bacteria</taxon>
        <taxon>Bacillati</taxon>
        <taxon>Bacillota</taxon>
        <taxon>Bacilli</taxon>
        <taxon>Bacillales</taxon>
        <taxon>Bacillaceae</taxon>
        <taxon>Bacillus</taxon>
        <taxon>Bacillus cereus group</taxon>
    </lineage>
</organism>
<gene>
    <name evidence="1" type="primary">pxpA</name>
    <name type="ordered locus">BCQ_2904</name>
</gene>
<reference key="1">
    <citation type="journal article" date="2009" name="J. Bacteriol.">
        <title>Complete genome sequence of the extremophilic Bacillus cereus strain Q1 with industrial applications.</title>
        <authorList>
            <person name="Xiong Z."/>
            <person name="Jiang Y."/>
            <person name="Qi D."/>
            <person name="Lu H."/>
            <person name="Yang F."/>
            <person name="Yang J."/>
            <person name="Chen L."/>
            <person name="Sun L."/>
            <person name="Xu X."/>
            <person name="Xue Y."/>
            <person name="Zhu Y."/>
            <person name="Jin Q."/>
        </authorList>
    </citation>
    <scope>NUCLEOTIDE SEQUENCE [LARGE SCALE GENOMIC DNA]</scope>
    <source>
        <strain>Q1</strain>
    </source>
</reference>
<evidence type="ECO:0000255" key="1">
    <source>
        <dbReference type="HAMAP-Rule" id="MF_00691"/>
    </source>
</evidence>
<keyword id="KW-0067">ATP-binding</keyword>
<keyword id="KW-0378">Hydrolase</keyword>
<keyword id="KW-0547">Nucleotide-binding</keyword>
<proteinExistence type="inferred from homology"/>
<sequence length="253" mass="27733">MTTIDLNCDLGESFGAYKMGNDDEILPFVSSINVACGFHAGDPSVMRQTVEKAMQHNVAIGAHPGFPDLIGFGRRNMNVPASEVYDYVLYQIGALDGFVKAAGGKMHHVKPHGALYNMAATNPEIADAIAKAIYHINPSLLLYGLANSEAFIQAAEKYNITLVQEAFADRTYKQDGTLTSRTEENALIKNEEEAIKQVLQMVKEGYVNSVNGQKVAVQAQTICLHGDGEKAVQFARRIYRTFENNEISICTPK</sequence>
<name>PXPA_BACCQ</name>
<protein>
    <recommendedName>
        <fullName evidence="1">5-oxoprolinase subunit A</fullName>
        <shortName evidence="1">5-OPase subunit A</shortName>
        <ecNumber evidence="1">3.5.2.9</ecNumber>
    </recommendedName>
    <alternativeName>
        <fullName evidence="1">5-oxoprolinase (ATP-hydrolyzing) subunit A</fullName>
    </alternativeName>
</protein>
<accession>B9J590</accession>
<dbReference type="EC" id="3.5.2.9" evidence="1"/>
<dbReference type="EMBL" id="CP000227">
    <property type="protein sequence ID" value="ACM13332.1"/>
    <property type="molecule type" value="Genomic_DNA"/>
</dbReference>
<dbReference type="SMR" id="B9J590"/>
<dbReference type="KEGG" id="bcq:BCQ_2904"/>
<dbReference type="HOGENOM" id="CLU_069535_0_0_9"/>
<dbReference type="Proteomes" id="UP000000441">
    <property type="component" value="Chromosome"/>
</dbReference>
<dbReference type="GO" id="GO:0017168">
    <property type="term" value="F:5-oxoprolinase (ATP-hydrolyzing) activity"/>
    <property type="evidence" value="ECO:0007669"/>
    <property type="project" value="UniProtKB-UniRule"/>
</dbReference>
<dbReference type="GO" id="GO:0005524">
    <property type="term" value="F:ATP binding"/>
    <property type="evidence" value="ECO:0007669"/>
    <property type="project" value="UniProtKB-UniRule"/>
</dbReference>
<dbReference type="GO" id="GO:0005975">
    <property type="term" value="P:carbohydrate metabolic process"/>
    <property type="evidence" value="ECO:0007669"/>
    <property type="project" value="InterPro"/>
</dbReference>
<dbReference type="CDD" id="cd10787">
    <property type="entry name" value="LamB_YcsF_like"/>
    <property type="match status" value="1"/>
</dbReference>
<dbReference type="Gene3D" id="3.20.20.370">
    <property type="entry name" value="Glycoside hydrolase/deacetylase"/>
    <property type="match status" value="1"/>
</dbReference>
<dbReference type="HAMAP" id="MF_00691">
    <property type="entry name" value="PxpA"/>
    <property type="match status" value="1"/>
</dbReference>
<dbReference type="InterPro" id="IPR011330">
    <property type="entry name" value="Glyco_hydro/deAcase_b/a-brl"/>
</dbReference>
<dbReference type="InterPro" id="IPR005501">
    <property type="entry name" value="LamB/YcsF/PxpA-like"/>
</dbReference>
<dbReference type="NCBIfam" id="NF003813">
    <property type="entry name" value="PRK05406.1-2"/>
    <property type="match status" value="1"/>
</dbReference>
<dbReference type="NCBIfam" id="NF003814">
    <property type="entry name" value="PRK05406.1-3"/>
    <property type="match status" value="1"/>
</dbReference>
<dbReference type="NCBIfam" id="NF003816">
    <property type="entry name" value="PRK05406.1-5"/>
    <property type="match status" value="1"/>
</dbReference>
<dbReference type="PANTHER" id="PTHR30292:SF0">
    <property type="entry name" value="5-OXOPROLINASE SUBUNIT A"/>
    <property type="match status" value="1"/>
</dbReference>
<dbReference type="PANTHER" id="PTHR30292">
    <property type="entry name" value="UNCHARACTERIZED PROTEIN YBGL-RELATED"/>
    <property type="match status" value="1"/>
</dbReference>
<dbReference type="Pfam" id="PF03746">
    <property type="entry name" value="LamB_YcsF"/>
    <property type="match status" value="1"/>
</dbReference>
<dbReference type="SUPFAM" id="SSF88713">
    <property type="entry name" value="Glycoside hydrolase/deacetylase"/>
    <property type="match status" value="1"/>
</dbReference>
<comment type="function">
    <text evidence="1">Catalyzes the cleavage of 5-oxoproline to form L-glutamate coupled to the hydrolysis of ATP to ADP and inorganic phosphate.</text>
</comment>
<comment type="catalytic activity">
    <reaction evidence="1">
        <text>5-oxo-L-proline + ATP + 2 H2O = L-glutamate + ADP + phosphate + H(+)</text>
        <dbReference type="Rhea" id="RHEA:10348"/>
        <dbReference type="ChEBI" id="CHEBI:15377"/>
        <dbReference type="ChEBI" id="CHEBI:15378"/>
        <dbReference type="ChEBI" id="CHEBI:29985"/>
        <dbReference type="ChEBI" id="CHEBI:30616"/>
        <dbReference type="ChEBI" id="CHEBI:43474"/>
        <dbReference type="ChEBI" id="CHEBI:58402"/>
        <dbReference type="ChEBI" id="CHEBI:456216"/>
        <dbReference type="EC" id="3.5.2.9"/>
    </reaction>
</comment>
<comment type="subunit">
    <text evidence="1">Forms a complex composed of PxpA, PxpB and PxpC.</text>
</comment>
<comment type="similarity">
    <text evidence="1">Belongs to the LamB/PxpA family.</text>
</comment>